<name>SAMHT_CHLT2</name>
<evidence type="ECO:0000255" key="1"/>
<evidence type="ECO:0000269" key="2">
    <source>
    </source>
</evidence>
<evidence type="ECO:0000305" key="3"/>
<sequence length="327" mass="36069">MVAVKALLFACTLRTCVFKPCCDMAIFLIFLNAFIWSSSFALSKSAMEAAAPLFVTGSRMVLAGVVLFGLLLCKRESLRLPRPAIMPIVLLSVIGFYLTNVLEFIGLQRLSSSTACFIYGFSPFTAAFCSYVQLREVVTWKKLGGLSLGLVSYLVYLLFGGSEDVAEWGWQLGLPELLLIAATCLSSYGWTLLRKLGRRCESLSMTAINAYAMVIAGVLSLIHSAVTEVWNPVPVENPLLFLQAIGALVIFSNLICYNLFAKLLRSFSSTFLSFCNLVMPLFASFFGWLLLGESFPPGLLFAVGFMVLGCRLIYHEEFRQGYVLTSE</sequence>
<keyword id="KW-1003">Cell membrane</keyword>
<keyword id="KW-0472">Membrane</keyword>
<keyword id="KW-0677">Repeat</keyword>
<keyword id="KW-0812">Transmembrane</keyword>
<keyword id="KW-1133">Transmembrane helix</keyword>
<keyword id="KW-0813">Transport</keyword>
<proteinExistence type="evidence at protein level"/>
<reference key="1">
    <citation type="journal article" date="2008" name="Genome Res.">
        <title>Chlamydia trachomatis: genome sequence analysis of lymphogranuloma venereum isolates.</title>
        <authorList>
            <person name="Thomson N.R."/>
            <person name="Holden M.T.G."/>
            <person name="Carder C."/>
            <person name="Lennard N."/>
            <person name="Lockey S.J."/>
            <person name="Marsh P."/>
            <person name="Skipp P."/>
            <person name="O'Connor C.D."/>
            <person name="Goodhead I."/>
            <person name="Norbertzcak H."/>
            <person name="Harris B."/>
            <person name="Ormond D."/>
            <person name="Rance R."/>
            <person name="Quail M.A."/>
            <person name="Parkhill J."/>
            <person name="Stephens R.S."/>
            <person name="Clarke I.N."/>
        </authorList>
    </citation>
    <scope>NUCLEOTIDE SEQUENCE [LARGE SCALE GENOMIC DNA]</scope>
    <source>
        <strain>ATCC VR-902B / DSM 19102 / 434/Bu</strain>
    </source>
</reference>
<reference key="2">
    <citation type="journal article" date="2011" name="MBio">
        <title>Identification and characterization of the Chlamydia trachomatis L2 S-adenosylmethionine transporter.</title>
        <authorList>
            <person name="Binet R."/>
            <person name="Fernandez R.E."/>
            <person name="Fisher D.J."/>
            <person name="Maurelli A.T."/>
        </authorList>
    </citation>
    <scope>FUNCTION</scope>
    <scope>ACTIVITY REGULATION</scope>
    <scope>BIOPHYSICOCHEMICAL PROPERTIES</scope>
    <source>
        <strain>ATCC VR-902B / DSM 19102 / 434/Bu</strain>
    </source>
</reference>
<organism>
    <name type="scientific">Chlamydia trachomatis serovar L2 (strain ATCC VR-902B / DSM 19102 / 434/Bu)</name>
    <dbReference type="NCBI Taxonomy" id="471472"/>
    <lineage>
        <taxon>Bacteria</taxon>
        <taxon>Pseudomonadati</taxon>
        <taxon>Chlamydiota</taxon>
        <taxon>Chlamydiia</taxon>
        <taxon>Chlamydiales</taxon>
        <taxon>Chlamydiaceae</taxon>
        <taxon>Chlamydia/Chlamydophila group</taxon>
        <taxon>Chlamydia</taxon>
    </lineage>
</organism>
<dbReference type="EMBL" id="AM884176">
    <property type="protein sequence ID" value="CAP04280.1"/>
    <property type="molecule type" value="Genomic_DNA"/>
</dbReference>
<dbReference type="RefSeq" id="YP_001654913.1">
    <property type="nucleotide sequence ID" value="NC_010287.1"/>
</dbReference>
<dbReference type="SMR" id="B0B8F4"/>
<dbReference type="TCDB" id="2.A.7.3.20">
    <property type="family name" value="the drug/metabolite transporter (dmt) superfamily"/>
</dbReference>
<dbReference type="KEGG" id="ctb:CTL0843"/>
<dbReference type="PATRIC" id="fig|471472.4.peg.904"/>
<dbReference type="HOGENOM" id="CLU_080359_0_0_0"/>
<dbReference type="Proteomes" id="UP001154402">
    <property type="component" value="Chromosome"/>
</dbReference>
<dbReference type="GO" id="GO:0005886">
    <property type="term" value="C:plasma membrane"/>
    <property type="evidence" value="ECO:0007669"/>
    <property type="project" value="UniProtKB-SubCell"/>
</dbReference>
<dbReference type="InterPro" id="IPR050638">
    <property type="entry name" value="AA-Vitamin_Transporters"/>
</dbReference>
<dbReference type="InterPro" id="IPR000620">
    <property type="entry name" value="EamA_dom"/>
</dbReference>
<dbReference type="PANTHER" id="PTHR32322">
    <property type="entry name" value="INNER MEMBRANE TRANSPORTER"/>
    <property type="match status" value="1"/>
</dbReference>
<dbReference type="PANTHER" id="PTHR32322:SF18">
    <property type="entry name" value="S-ADENOSYLMETHIONINE_S-ADENOSYLHOMOCYSTEINE TRANSPORTER"/>
    <property type="match status" value="1"/>
</dbReference>
<dbReference type="Pfam" id="PF00892">
    <property type="entry name" value="EamA"/>
    <property type="match status" value="2"/>
</dbReference>
<dbReference type="SUPFAM" id="SSF103481">
    <property type="entry name" value="Multidrug resistance efflux transporter EmrE"/>
    <property type="match status" value="2"/>
</dbReference>
<accession>B0B8F4</accession>
<gene>
    <name type="ordered locus">CTL0843</name>
</gene>
<protein>
    <recommendedName>
        <fullName>S-adenosylmethionine/S-adenosylhomocysteine transporter</fullName>
        <shortName>SAM/SAH transporter</shortName>
        <shortName>SAMHT</shortName>
    </recommendedName>
</protein>
<feature type="chain" id="PRO_5000300993" description="S-adenosylmethionine/S-adenosylhomocysteine transporter">
    <location>
        <begin position="1"/>
        <end position="327"/>
    </location>
</feature>
<feature type="transmembrane region" description="Helical" evidence="1">
    <location>
        <begin position="22"/>
        <end position="42"/>
    </location>
</feature>
<feature type="transmembrane region" description="Helical" evidence="1">
    <location>
        <begin position="53"/>
        <end position="73"/>
    </location>
</feature>
<feature type="transmembrane region" description="Helical" evidence="1">
    <location>
        <begin position="85"/>
        <end position="105"/>
    </location>
</feature>
<feature type="transmembrane region" description="Helical" evidence="1">
    <location>
        <begin position="114"/>
        <end position="134"/>
    </location>
</feature>
<feature type="transmembrane region" description="Helical" evidence="1">
    <location>
        <begin position="143"/>
        <end position="163"/>
    </location>
</feature>
<feature type="transmembrane region" description="Helical" evidence="1">
    <location>
        <begin position="165"/>
        <end position="185"/>
    </location>
</feature>
<feature type="transmembrane region" description="Helical" evidence="1">
    <location>
        <begin position="202"/>
        <end position="222"/>
    </location>
</feature>
<feature type="transmembrane region" description="Helical" evidence="1">
    <location>
        <begin position="240"/>
        <end position="260"/>
    </location>
</feature>
<feature type="transmembrane region" description="Helical" evidence="1">
    <location>
        <begin position="271"/>
        <end position="291"/>
    </location>
</feature>
<feature type="transmembrane region" description="Helical" evidence="1">
    <location>
        <begin position="294"/>
        <end position="314"/>
    </location>
</feature>
<feature type="domain" description="EamA 1">
    <location>
        <begin position="34"/>
        <end position="157"/>
    </location>
</feature>
<feature type="domain" description="EamA 2">
    <location>
        <begin position="189"/>
        <end position="313"/>
    </location>
</feature>
<comment type="function">
    <text evidence="2">Transports S-adenosylmethionine (SAM) and S-adenosylhomocysteine (SAH). Allows bacteria to acquire SAM from the eukaryotic host cell and to likely remove the toxic by-product SAH.</text>
</comment>
<comment type="activity regulation">
    <text evidence="2">CCCP treatment reduces SAM intracellular uptake by 50%.</text>
</comment>
<comment type="biophysicochemical properties">
    <kinetics>
        <KM evidence="2">5.9 uM for SAM</KM>
        <Vmax evidence="2">32.0 pmol/min/mg enzyme</Vmax>
    </kinetics>
</comment>
<comment type="subcellular location">
    <subcellularLocation>
        <location evidence="3">Cell membrane</location>
        <topology evidence="3">Multi-pass membrane protein</topology>
    </subcellularLocation>
</comment>
<comment type="similarity">
    <text evidence="3">Belongs to the drug/metabolite transporter (DMT) superfamily. 10 TMS drug/metabolite exporter (DME) (TC 2.A.7.3) family.</text>
</comment>